<dbReference type="EC" id="2.7.11.1"/>
<dbReference type="EMBL" id="AY232265">
    <property type="protein sequence ID" value="AAO83648.1"/>
    <property type="molecule type" value="Genomic_DNA"/>
</dbReference>
<dbReference type="EMBL" id="AAFI02000011">
    <property type="protein sequence ID" value="EAL70508.1"/>
    <property type="molecule type" value="Genomic_DNA"/>
</dbReference>
<dbReference type="EMBL" id="AAFI02000009">
    <property type="protein sequence ID" value="EAL70847.1"/>
    <property type="molecule type" value="Genomic_DNA"/>
</dbReference>
<dbReference type="RefSeq" id="XP_644434.1">
    <property type="nucleotide sequence ID" value="XM_639342.1"/>
</dbReference>
<dbReference type="RefSeq" id="XP_644816.1">
    <property type="nucleotide sequence ID" value="XM_639724.1"/>
</dbReference>
<dbReference type="SMR" id="Q8SSS9"/>
<dbReference type="BioGRID" id="1243921">
    <property type="interactions" value="3"/>
</dbReference>
<dbReference type="FunCoup" id="Q8SSS9">
    <property type="interactions" value="2"/>
</dbReference>
<dbReference type="STRING" id="44689.Q8SSS9"/>
<dbReference type="PaxDb" id="44689-DDB0185215"/>
<dbReference type="EnsemblProtists" id="EAL70508">
    <property type="protein sequence ID" value="EAL70508"/>
    <property type="gene ID" value="DDB_G0273635"/>
</dbReference>
<dbReference type="EnsemblProtists" id="EAL70847">
    <property type="protein sequence ID" value="EAL70847"/>
    <property type="gene ID" value="DDB_G0273259"/>
</dbReference>
<dbReference type="GeneID" id="8618918"/>
<dbReference type="GeneID" id="8619059"/>
<dbReference type="KEGG" id="ddi:DDB_G0273259"/>
<dbReference type="KEGG" id="ddi:DDB_G0273635"/>
<dbReference type="dictyBase" id="DDB_G0273259">
    <property type="gene designation" value="qkgA-1"/>
</dbReference>
<dbReference type="dictyBase" id="DDB_G0273635">
    <property type="gene designation" value="qkgA-2"/>
</dbReference>
<dbReference type="VEuPathDB" id="AmoebaDB:DDB_G0273635"/>
<dbReference type="eggNOG" id="KOG0192">
    <property type="taxonomic scope" value="Eukaryota"/>
</dbReference>
<dbReference type="eggNOG" id="KOG0619">
    <property type="taxonomic scope" value="Eukaryota"/>
</dbReference>
<dbReference type="HOGENOM" id="CLU_002809_0_0_1"/>
<dbReference type="InParanoid" id="Q8SSS9"/>
<dbReference type="OMA" id="THIDSCT"/>
<dbReference type="PhylomeDB" id="Q8SSS9"/>
<dbReference type="Reactome" id="R-DDI-5675482">
    <property type="pathway name" value="Regulation of necroptotic cell death"/>
</dbReference>
<dbReference type="PRO" id="PR:Q8SSS9"/>
<dbReference type="Proteomes" id="UP000002195">
    <property type="component" value="Chromosome 2"/>
</dbReference>
<dbReference type="GO" id="GO:1904269">
    <property type="term" value="C:cell leading edge cell cortex"/>
    <property type="evidence" value="ECO:0000314"/>
    <property type="project" value="dictyBase"/>
</dbReference>
<dbReference type="GO" id="GO:0032154">
    <property type="term" value="C:cleavage furrow"/>
    <property type="evidence" value="ECO:0000314"/>
    <property type="project" value="dictyBase"/>
</dbReference>
<dbReference type="GO" id="GO:0005737">
    <property type="term" value="C:cytoplasm"/>
    <property type="evidence" value="ECO:0000314"/>
    <property type="project" value="dictyBase"/>
</dbReference>
<dbReference type="GO" id="GO:0030027">
    <property type="term" value="C:lamellipodium"/>
    <property type="evidence" value="ECO:0000314"/>
    <property type="project" value="dictyBase"/>
</dbReference>
<dbReference type="GO" id="GO:0031143">
    <property type="term" value="C:pseudopodium"/>
    <property type="evidence" value="ECO:0000314"/>
    <property type="project" value="dictyBase"/>
</dbReference>
<dbReference type="GO" id="GO:0005524">
    <property type="term" value="F:ATP binding"/>
    <property type="evidence" value="ECO:0007669"/>
    <property type="project" value="UniProtKB-KW"/>
</dbReference>
<dbReference type="GO" id="GO:0004672">
    <property type="term" value="F:protein kinase activity"/>
    <property type="evidence" value="ECO:0000314"/>
    <property type="project" value="dictyBase"/>
</dbReference>
<dbReference type="GO" id="GO:0106310">
    <property type="term" value="F:protein serine kinase activity"/>
    <property type="evidence" value="ECO:0007669"/>
    <property type="project" value="RHEA"/>
</dbReference>
<dbReference type="GO" id="GO:0004674">
    <property type="term" value="F:protein serine/threonine kinase activity"/>
    <property type="evidence" value="ECO:0007669"/>
    <property type="project" value="UniProtKB-KW"/>
</dbReference>
<dbReference type="GO" id="GO:0004713">
    <property type="term" value="F:protein tyrosine kinase activity"/>
    <property type="evidence" value="ECO:0007669"/>
    <property type="project" value="InterPro"/>
</dbReference>
<dbReference type="GO" id="GO:0140986">
    <property type="term" value="P:G protein-coupled chemorepellent receptor signaling pathway"/>
    <property type="evidence" value="ECO:0000314"/>
    <property type="project" value="dictyBase"/>
</dbReference>
<dbReference type="GO" id="GO:0031158">
    <property type="term" value="P:negative regulation of aggregate size involved in sorocarp development"/>
    <property type="evidence" value="ECO:0000315"/>
    <property type="project" value="dictyBase"/>
</dbReference>
<dbReference type="GO" id="GO:1903665">
    <property type="term" value="P:negative regulation of asexual reproduction"/>
    <property type="evidence" value="ECO:0000315"/>
    <property type="project" value="dictyBase"/>
</dbReference>
<dbReference type="GO" id="GO:0006997">
    <property type="term" value="P:nucleus organization"/>
    <property type="evidence" value="ECO:0000315"/>
    <property type="project" value="dictyBase"/>
</dbReference>
<dbReference type="GO" id="GO:0032956">
    <property type="term" value="P:regulation of actin cytoskeleton organization"/>
    <property type="evidence" value="ECO:0000315"/>
    <property type="project" value="dictyBase"/>
</dbReference>
<dbReference type="GO" id="GO:0032465">
    <property type="term" value="P:regulation of cytokinesis"/>
    <property type="evidence" value="ECO:0000315"/>
    <property type="project" value="dictyBase"/>
</dbReference>
<dbReference type="GO" id="GO:0031272">
    <property type="term" value="P:regulation of pseudopodium assembly"/>
    <property type="evidence" value="ECO:0000315"/>
    <property type="project" value="dictyBase"/>
</dbReference>
<dbReference type="GO" id="GO:0007165">
    <property type="term" value="P:signal transduction"/>
    <property type="evidence" value="ECO:0000318"/>
    <property type="project" value="GO_Central"/>
</dbReference>
<dbReference type="GO" id="GO:0007264">
    <property type="term" value="P:small GTPase-mediated signal transduction"/>
    <property type="evidence" value="ECO:0000315"/>
    <property type="project" value="dictyBase"/>
</dbReference>
<dbReference type="CDD" id="cd13999">
    <property type="entry name" value="STKc_MAP3K-like"/>
    <property type="match status" value="1"/>
</dbReference>
<dbReference type="FunFam" id="1.10.510.10:FF:001859">
    <property type="entry name" value="Probable serine/threonine-protein kinase roco4"/>
    <property type="match status" value="1"/>
</dbReference>
<dbReference type="FunFam" id="3.30.200.20:FF:000803">
    <property type="entry name" value="Probable serine/threonine-protein kinase roco4"/>
    <property type="match status" value="1"/>
</dbReference>
<dbReference type="FunFam" id="3.80.10.10:FF:002471">
    <property type="entry name" value="Probable serine/threonine-protein kinase roco4"/>
    <property type="match status" value="1"/>
</dbReference>
<dbReference type="Gene3D" id="3.40.50.300">
    <property type="entry name" value="P-loop containing nucleotide triphosphate hydrolases"/>
    <property type="match status" value="1"/>
</dbReference>
<dbReference type="Gene3D" id="3.30.200.20">
    <property type="entry name" value="Phosphorylase Kinase, domain 1"/>
    <property type="match status" value="1"/>
</dbReference>
<dbReference type="Gene3D" id="3.80.10.10">
    <property type="entry name" value="Ribonuclease Inhibitor"/>
    <property type="match status" value="1"/>
</dbReference>
<dbReference type="Gene3D" id="3.30.70.1390">
    <property type="entry name" value="ROC domain from the Parkinson's disease-associated leucine-rich repeat kinase 2"/>
    <property type="match status" value="1"/>
</dbReference>
<dbReference type="Gene3D" id="1.10.510.10">
    <property type="entry name" value="Transferase(Phosphotransferase) domain 1"/>
    <property type="match status" value="1"/>
</dbReference>
<dbReference type="Gene3D" id="1.10.10.10">
    <property type="entry name" value="Winged helix-like DNA-binding domain superfamily/Winged helix DNA-binding domain"/>
    <property type="match status" value="1"/>
</dbReference>
<dbReference type="InterPro" id="IPR032171">
    <property type="entry name" value="COR-A"/>
</dbReference>
<dbReference type="InterPro" id="IPR011009">
    <property type="entry name" value="Kinase-like_dom_sf"/>
</dbReference>
<dbReference type="InterPro" id="IPR001611">
    <property type="entry name" value="Leu-rich_rpt"/>
</dbReference>
<dbReference type="InterPro" id="IPR032675">
    <property type="entry name" value="LRR_dom_sf"/>
</dbReference>
<dbReference type="InterPro" id="IPR027417">
    <property type="entry name" value="P-loop_NTPase"/>
</dbReference>
<dbReference type="InterPro" id="IPR000719">
    <property type="entry name" value="Prot_kinase_dom"/>
</dbReference>
<dbReference type="InterPro" id="IPR017441">
    <property type="entry name" value="Protein_kinase_ATP_BS"/>
</dbReference>
<dbReference type="InterPro" id="IPR020859">
    <property type="entry name" value="ROC"/>
</dbReference>
<dbReference type="InterPro" id="IPR001245">
    <property type="entry name" value="Ser-Thr/Tyr_kinase_cat_dom"/>
</dbReference>
<dbReference type="InterPro" id="IPR050167">
    <property type="entry name" value="Ser_Thr_protein_kinase"/>
</dbReference>
<dbReference type="InterPro" id="IPR020635">
    <property type="entry name" value="Tyr_kinase_cat_dom"/>
</dbReference>
<dbReference type="InterPro" id="IPR036388">
    <property type="entry name" value="WH-like_DNA-bd_sf"/>
</dbReference>
<dbReference type="PANTHER" id="PTHR23257">
    <property type="entry name" value="SERINE-THREONINE PROTEIN KINASE"/>
    <property type="match status" value="1"/>
</dbReference>
<dbReference type="PANTHER" id="PTHR23257:SF742">
    <property type="entry name" value="SERINE_THREONINE-PROTEIN KINASE QKGA-RELATED"/>
    <property type="match status" value="1"/>
</dbReference>
<dbReference type="Pfam" id="PF16095">
    <property type="entry name" value="COR-A"/>
    <property type="match status" value="1"/>
</dbReference>
<dbReference type="Pfam" id="PF25497">
    <property type="entry name" value="COR-B"/>
    <property type="match status" value="1"/>
</dbReference>
<dbReference type="Pfam" id="PF07714">
    <property type="entry name" value="PK_Tyr_Ser-Thr"/>
    <property type="match status" value="1"/>
</dbReference>
<dbReference type="Pfam" id="PF08477">
    <property type="entry name" value="Roc"/>
    <property type="match status" value="1"/>
</dbReference>
<dbReference type="SMART" id="SM00219">
    <property type="entry name" value="TyrKc"/>
    <property type="match status" value="1"/>
</dbReference>
<dbReference type="SUPFAM" id="SSF52058">
    <property type="entry name" value="L domain-like"/>
    <property type="match status" value="1"/>
</dbReference>
<dbReference type="SUPFAM" id="SSF52540">
    <property type="entry name" value="P-loop containing nucleoside triphosphate hydrolases"/>
    <property type="match status" value="1"/>
</dbReference>
<dbReference type="SUPFAM" id="SSF56112">
    <property type="entry name" value="Protein kinase-like (PK-like)"/>
    <property type="match status" value="1"/>
</dbReference>
<dbReference type="PROSITE" id="PS51450">
    <property type="entry name" value="LRR"/>
    <property type="match status" value="3"/>
</dbReference>
<dbReference type="PROSITE" id="PS00107">
    <property type="entry name" value="PROTEIN_KINASE_ATP"/>
    <property type="match status" value="1"/>
</dbReference>
<dbReference type="PROSITE" id="PS50011">
    <property type="entry name" value="PROTEIN_KINASE_DOM"/>
    <property type="match status" value="1"/>
</dbReference>
<dbReference type="PROSITE" id="PS51424">
    <property type="entry name" value="ROC"/>
    <property type="match status" value="1"/>
</dbReference>
<feature type="chain" id="PRO_0000355208" description="Probable serine/threonine-protein kinase qkgA">
    <location>
        <begin position="1"/>
        <end position="1553"/>
    </location>
</feature>
<feature type="repeat" description="LRR 1">
    <location>
        <begin position="287"/>
        <end position="309"/>
    </location>
</feature>
<feature type="repeat" description="LRR 2">
    <location>
        <begin position="311"/>
        <end position="333"/>
    </location>
</feature>
<feature type="repeat" description="LRR 3">
    <location>
        <begin position="334"/>
        <end position="356"/>
    </location>
</feature>
<feature type="repeat" description="LRR 4">
    <location>
        <begin position="357"/>
        <end position="378"/>
    </location>
</feature>
<feature type="domain" description="Roc" evidence="3">
    <location>
        <begin position="395"/>
        <end position="619"/>
    </location>
</feature>
<feature type="domain" description="COR" evidence="1">
    <location>
        <begin position="694"/>
        <end position="893"/>
    </location>
</feature>
<feature type="domain" description="Protein kinase" evidence="2">
    <location>
        <begin position="1242"/>
        <end position="1546"/>
    </location>
</feature>
<feature type="region of interest" description="Disordered" evidence="4">
    <location>
        <begin position="113"/>
        <end position="142"/>
    </location>
</feature>
<feature type="region of interest" description="Disordered" evidence="4">
    <location>
        <begin position="643"/>
        <end position="696"/>
    </location>
</feature>
<feature type="region of interest" description="Disordered" evidence="4">
    <location>
        <begin position="955"/>
        <end position="1019"/>
    </location>
</feature>
<feature type="region of interest" description="Disordered" evidence="4">
    <location>
        <begin position="1048"/>
        <end position="1090"/>
    </location>
</feature>
<feature type="compositionally biased region" description="Low complexity" evidence="4">
    <location>
        <begin position="648"/>
        <end position="675"/>
    </location>
</feature>
<feature type="compositionally biased region" description="Low complexity" evidence="4">
    <location>
        <begin position="683"/>
        <end position="696"/>
    </location>
</feature>
<feature type="compositionally biased region" description="Low complexity" evidence="4">
    <location>
        <begin position="956"/>
        <end position="1018"/>
    </location>
</feature>
<feature type="compositionally biased region" description="Low complexity" evidence="4">
    <location>
        <begin position="1059"/>
        <end position="1090"/>
    </location>
</feature>
<feature type="active site" description="Proton acceptor" evidence="2">
    <location>
        <position position="1393"/>
    </location>
</feature>
<feature type="binding site" evidence="2">
    <location>
        <begin position="1248"/>
        <end position="1256"/>
    </location>
    <ligand>
        <name>ATP</name>
        <dbReference type="ChEBI" id="CHEBI:30616"/>
    </ligand>
</feature>
<feature type="binding site" evidence="2">
    <location>
        <position position="1271"/>
    </location>
    <ligand>
        <name>ATP</name>
        <dbReference type="ChEBI" id="CHEBI:30616"/>
    </ligand>
</feature>
<keyword id="KW-0067">ATP-binding</keyword>
<keyword id="KW-0418">Kinase</keyword>
<keyword id="KW-0433">Leucine-rich repeat</keyword>
<keyword id="KW-0547">Nucleotide-binding</keyword>
<keyword id="KW-1185">Reference proteome</keyword>
<keyword id="KW-0677">Repeat</keyword>
<keyword id="KW-0723">Serine/threonine-protein kinase</keyword>
<keyword id="KW-0808">Transferase</keyword>
<accession>Q8SSS9</accession>
<accession>Q557D4</accession>
<proteinExistence type="inferred from homology"/>
<protein>
    <recommendedName>
        <fullName>Probable serine/threonine-protein kinase qkgA</fullName>
        <ecNumber>2.7.11.1</ecNumber>
    </recommendedName>
    <alternativeName>
        <fullName>Quick growth protein qkgA</fullName>
    </alternativeName>
    <alternativeName>
        <fullName>Ras of complex proteins and C-terminal of roc 2</fullName>
    </alternativeName>
</protein>
<reference key="1">
    <citation type="journal article" date="2003" name="Biochim. Biophys. Acta">
        <title>Roc, a Ras/GTPase domain in complex proteins.</title>
        <authorList>
            <person name="Bosgraaf L."/>
            <person name="van Haastert P.J.M."/>
        </authorList>
    </citation>
    <scope>NUCLEOTIDE SEQUENCE [GENOMIC DNA]</scope>
</reference>
<reference key="2">
    <citation type="journal article" date="2002" name="Nature">
        <title>Sequence and analysis of chromosome 2 of Dictyostelium discoideum.</title>
        <authorList>
            <person name="Gloeckner G."/>
            <person name="Eichinger L."/>
            <person name="Szafranski K."/>
            <person name="Pachebat J.A."/>
            <person name="Bankier A.T."/>
            <person name="Dear P.H."/>
            <person name="Lehmann R."/>
            <person name="Baumgart C."/>
            <person name="Parra G."/>
            <person name="Abril J.F."/>
            <person name="Guigo R."/>
            <person name="Kumpf K."/>
            <person name="Tunggal B."/>
            <person name="Cox E.C."/>
            <person name="Quail M.A."/>
            <person name="Platzer M."/>
            <person name="Rosenthal A."/>
            <person name="Noegel A.A."/>
        </authorList>
    </citation>
    <scope>NUCLEOTIDE SEQUENCE [LARGE SCALE GENOMIC DNA]</scope>
    <source>
        <strain>AX4</strain>
    </source>
</reference>
<reference key="3">
    <citation type="journal article" date="2005" name="Nature">
        <title>The genome of the social amoeba Dictyostelium discoideum.</title>
        <authorList>
            <person name="Eichinger L."/>
            <person name="Pachebat J.A."/>
            <person name="Gloeckner G."/>
            <person name="Rajandream M.A."/>
            <person name="Sucgang R."/>
            <person name="Berriman M."/>
            <person name="Song J."/>
            <person name="Olsen R."/>
            <person name="Szafranski K."/>
            <person name="Xu Q."/>
            <person name="Tunggal B."/>
            <person name="Kummerfeld S."/>
            <person name="Madera M."/>
            <person name="Konfortov B.A."/>
            <person name="Rivero F."/>
            <person name="Bankier A.T."/>
            <person name="Lehmann R."/>
            <person name="Hamlin N."/>
            <person name="Davies R."/>
            <person name="Gaudet P."/>
            <person name="Fey P."/>
            <person name="Pilcher K."/>
            <person name="Chen G."/>
            <person name="Saunders D."/>
            <person name="Sodergren E.J."/>
            <person name="Davis P."/>
            <person name="Kerhornou A."/>
            <person name="Nie X."/>
            <person name="Hall N."/>
            <person name="Anjard C."/>
            <person name="Hemphill L."/>
            <person name="Bason N."/>
            <person name="Farbrother P."/>
            <person name="Desany B."/>
            <person name="Just E."/>
            <person name="Morio T."/>
            <person name="Rost R."/>
            <person name="Churcher C.M."/>
            <person name="Cooper J."/>
            <person name="Haydock S."/>
            <person name="van Driessche N."/>
            <person name="Cronin A."/>
            <person name="Goodhead I."/>
            <person name="Muzny D.M."/>
            <person name="Mourier T."/>
            <person name="Pain A."/>
            <person name="Lu M."/>
            <person name="Harper D."/>
            <person name="Lindsay R."/>
            <person name="Hauser H."/>
            <person name="James K.D."/>
            <person name="Quiles M."/>
            <person name="Madan Babu M."/>
            <person name="Saito T."/>
            <person name="Buchrieser C."/>
            <person name="Wardroper A."/>
            <person name="Felder M."/>
            <person name="Thangavelu M."/>
            <person name="Johnson D."/>
            <person name="Knights A."/>
            <person name="Loulseged H."/>
            <person name="Mungall K.L."/>
            <person name="Oliver K."/>
            <person name="Price C."/>
            <person name="Quail M.A."/>
            <person name="Urushihara H."/>
            <person name="Hernandez J."/>
            <person name="Rabbinowitsch E."/>
            <person name="Steffen D."/>
            <person name="Sanders M."/>
            <person name="Ma J."/>
            <person name="Kohara Y."/>
            <person name="Sharp S."/>
            <person name="Simmonds M.N."/>
            <person name="Spiegler S."/>
            <person name="Tivey A."/>
            <person name="Sugano S."/>
            <person name="White B."/>
            <person name="Walker D."/>
            <person name="Woodward J.R."/>
            <person name="Winckler T."/>
            <person name="Tanaka Y."/>
            <person name="Shaulsky G."/>
            <person name="Schleicher M."/>
            <person name="Weinstock G.M."/>
            <person name="Rosenthal A."/>
            <person name="Cox E.C."/>
            <person name="Chisholm R.L."/>
            <person name="Gibbs R.A."/>
            <person name="Loomis W.F."/>
            <person name="Platzer M."/>
            <person name="Kay R.R."/>
            <person name="Williams J.G."/>
            <person name="Dear P.H."/>
            <person name="Noegel A.A."/>
            <person name="Barrell B.G."/>
            <person name="Kuspa A."/>
        </authorList>
    </citation>
    <scope>NUCLEOTIDE SEQUENCE [LARGE SCALE GENOMIC DNA]</scope>
    <source>
        <strain>AX4</strain>
    </source>
</reference>
<reference key="4">
    <citation type="journal article" date="2003" name="Nucleic Acids Res.">
        <title>Rapid generation of gene disruption constructs by in vitro transposition and identification of a Dictyostelium protein kinase that regulates its rate of growth and development.</title>
        <authorList>
            <person name="Abe T."/>
            <person name="Langenick J."/>
            <person name="Williams J.G."/>
        </authorList>
    </citation>
    <scope>FUNCTION</scope>
</reference>
<evidence type="ECO:0000255" key="1"/>
<evidence type="ECO:0000255" key="2">
    <source>
        <dbReference type="PROSITE-ProRule" id="PRU00159"/>
    </source>
</evidence>
<evidence type="ECO:0000255" key="3">
    <source>
        <dbReference type="PROSITE-ProRule" id="PRU00758"/>
    </source>
</evidence>
<evidence type="ECO:0000256" key="4">
    <source>
        <dbReference type="SAM" id="MobiDB-lite"/>
    </source>
</evidence>
<evidence type="ECO:0000269" key="5">
    <source>
    </source>
</evidence>
<evidence type="ECO:0000305" key="6"/>
<organism>
    <name type="scientific">Dictyostelium discoideum</name>
    <name type="common">Social amoeba</name>
    <dbReference type="NCBI Taxonomy" id="44689"/>
    <lineage>
        <taxon>Eukaryota</taxon>
        <taxon>Amoebozoa</taxon>
        <taxon>Evosea</taxon>
        <taxon>Eumycetozoa</taxon>
        <taxon>Dictyostelia</taxon>
        <taxon>Dictyosteliales</taxon>
        <taxon>Dictyosteliaceae</taxon>
        <taxon>Dictyostelium</taxon>
    </lineage>
</organism>
<sequence>MDLEQDEWMSQRQRQQQMEFSRIGIEVIGSKKDLIVNSMKNHETTLTIINETYRIVYYDQYESKFTSCNIITFDGKDKRSIKKMKRVVQKLSNESTNSSHQFDLHSHALLQSSSSSSSSSTSSSPSLTSSPSSPISTSPPYHSSPQLLEHLLHQQQPITSVGSKPSFFVIINLYNDDRQSYMSEIVSFAGSFQFIEWRNDESWKEVFKLSSNLLTYHVKKNELARACTLGDINLLDEIILSGCSKSQLKEAQGAGYTIVFNSYTSYSSGSSLVVSGTMALLCAIVENGTFLLLSKSNITRFPMSIINMCSQLVELDMSNNRITEIPIEITELKFLKNLNLSDNLINDIPLEICNLTLLKVLLLNENPLNNFPSSIVELGTKKLLSFCRNILEGKSCETWNKVKLMFVGEEGVGKTRLCKLLIGSKYNKKKSSSSSSSSLSSLSSALSSSSSSSSIINSNSISNSNINMVNIKNENQVTGDTVSTEGVNIHDFKSKKVEFYAWDFGGQQIFYPTHQFFLTTQSLYLLIFRVNDSNFAERVNYWVHQIKAKSGISLPIIFFVGTHIDSCTPEQLSMAESILKSNFIKYSRVKQNVINFVSCVTGKGVKELKKRLIHESEKSRLIKKDIPGSYIILEQRLSNRGANQGRMSISNSASNSSSSLLNSSSSSSPSLTSKKSSSHLKHSQQQQQQHQQQQQQLQQSIKEKYIDYDDYLNECKLSYLKPHEIKDATDFLHNLGIILHFDSPKLNNLVVLDPQWLADVMSSLITFSHSWIKLGILNHSDLQSIWGGRYKQTLWPSLLKLLEKFEVSYQLPNLSKSLIPSLLPDDPIGEILEIKDREWVPLKLAMENNYVQVFGCDYHFSFMPLGFFARLLLRILLIQGIDIKTYWKDGVLLDILTPSDKIKQQQLLQKKSIFEPTTTLSPFLCSLSLTDSQNYSPLEPPPLILNSPRVNRKFISNSTSTTSTTTSTTSTSTTSSNNITPLSMSSITPYSPTSPRTPSFSSSSTTTSSSSSSSSPSSQFCGVGCHRNINKNNGSSNELIKTLTKINNQNGSSGELIKTTTTTSTSTSTTSTTTPTTTTPTIPIKNNNNKKLPINRTVSSLCLTAKPKLQALITFIKKKSFEQSHDNDSYKLNIQVRTYNTTIDKEHSVSLFFQQLLFTIDTLISGSYQGLEVTRTIPCTHCIQLNPTIEPYHFDLGDCISALEDGRSHVYCGNDPNTPVRIDYIAPDICLKKVPTFTDDQILYERQIGEGGFGLIHKGKLISNKSDIAIKSLILCNSNNNNNSNNNNNSNNSNNFKNNNNEDEFIEKFQEFQHEVFIMSNLNHPNIVKLYGLMHNPPRMVMEYVEHGDLYHLCQDKERYASLGWTLKLRLMIDIAKGIGYMQNQNPPIVHRDLRSPNIFLKSLDENSPVCAKIADFGLSQQSVYSVSGLLGNFQWMAPETIGVEDESYTEKVDTYSFAMILFTILTGEIPFDEYSFGKMQFINLIREENLRPTLPFDCDPRLSNLIQLCWSTNPKKRPSFTFIIKELLEIRIDSIQTSYFDSPFLKNYPASI</sequence>
<name>QKGA_DICDI</name>
<gene>
    <name type="primary">qkgA-1</name>
    <name type="synonym">roco2-1</name>
    <name type="ORF">DDB_G0273259</name>
</gene>
<gene>
    <name type="primary">qkgA-2</name>
    <name type="synonym">roco2-2</name>
    <name type="ORF">DDB_G0273635</name>
</gene>
<comment type="function">
    <text evidence="5">Involved in growth, and during development, in aggregation.</text>
</comment>
<comment type="catalytic activity">
    <reaction>
        <text>L-seryl-[protein] + ATP = O-phospho-L-seryl-[protein] + ADP + H(+)</text>
        <dbReference type="Rhea" id="RHEA:17989"/>
        <dbReference type="Rhea" id="RHEA-COMP:9863"/>
        <dbReference type="Rhea" id="RHEA-COMP:11604"/>
        <dbReference type="ChEBI" id="CHEBI:15378"/>
        <dbReference type="ChEBI" id="CHEBI:29999"/>
        <dbReference type="ChEBI" id="CHEBI:30616"/>
        <dbReference type="ChEBI" id="CHEBI:83421"/>
        <dbReference type="ChEBI" id="CHEBI:456216"/>
        <dbReference type="EC" id="2.7.11.1"/>
    </reaction>
</comment>
<comment type="catalytic activity">
    <reaction>
        <text>L-threonyl-[protein] + ATP = O-phospho-L-threonyl-[protein] + ADP + H(+)</text>
        <dbReference type="Rhea" id="RHEA:46608"/>
        <dbReference type="Rhea" id="RHEA-COMP:11060"/>
        <dbReference type="Rhea" id="RHEA-COMP:11605"/>
        <dbReference type="ChEBI" id="CHEBI:15378"/>
        <dbReference type="ChEBI" id="CHEBI:30013"/>
        <dbReference type="ChEBI" id="CHEBI:30616"/>
        <dbReference type="ChEBI" id="CHEBI:61977"/>
        <dbReference type="ChEBI" id="CHEBI:456216"/>
        <dbReference type="EC" id="2.7.11.1"/>
    </reaction>
</comment>
<comment type="similarity">
    <text evidence="6">Belongs to the protein kinase superfamily. TKL Ser/Thr protein kinase family. ROCO subfamily.</text>
</comment>
<comment type="caution">
    <text evidence="6">The gene for this protein is duplicated in strains AX3 and AX4. These strains contain a duplication of a segment of 750 kb of chromosome 2 compared to the corresponding sequence in strain AX2.</text>
</comment>